<reference key="1">
    <citation type="submission" date="2004-11" db="EMBL/GenBank/DDBJ databases">
        <title>Complete genome sequence of Thermus thermophilus HB8.</title>
        <authorList>
            <person name="Masui R."/>
            <person name="Kurokawa K."/>
            <person name="Nakagawa N."/>
            <person name="Tokunaga F."/>
            <person name="Koyama Y."/>
            <person name="Shibata T."/>
            <person name="Oshima T."/>
            <person name="Yokoyama S."/>
            <person name="Yasunaga T."/>
            <person name="Kuramitsu S."/>
        </authorList>
    </citation>
    <scope>NUCLEOTIDE SEQUENCE [LARGE SCALE GENOMIC DNA]</scope>
    <source>
        <strain>ATCC 27634 / DSM 579 / HB8</strain>
    </source>
</reference>
<reference key="2">
    <citation type="submission" date="2003-06" db="PDB data bank">
        <title>Crystal structure of pantothenate synthetase from Thermus thermophilus HB8.</title>
        <authorList>
            <consortium name="RIKEN structural genomics initiative (RSGI)"/>
        </authorList>
    </citation>
    <scope>X-RAY CRYSTALLOGRAPHY (1.9 ANGSTROMS)</scope>
    <scope>SUBUNIT</scope>
</reference>
<dbReference type="EC" id="6.3.2.1" evidence="1"/>
<dbReference type="EMBL" id="AP008226">
    <property type="protein sequence ID" value="BAD71598.1"/>
    <property type="molecule type" value="Genomic_DNA"/>
</dbReference>
<dbReference type="RefSeq" id="WP_011173797.1">
    <property type="nucleotide sequence ID" value="NC_006461.1"/>
</dbReference>
<dbReference type="RefSeq" id="YP_145041.1">
    <property type="nucleotide sequence ID" value="NC_006461.1"/>
</dbReference>
<dbReference type="PDB" id="1UFV">
    <property type="method" value="X-ray"/>
    <property type="resolution" value="2.05 A"/>
    <property type="chains" value="A/B=1-276"/>
</dbReference>
<dbReference type="PDB" id="1V8F">
    <property type="method" value="X-ray"/>
    <property type="resolution" value="1.90 A"/>
    <property type="chains" value="A/B=1-276"/>
</dbReference>
<dbReference type="PDBsum" id="1UFV"/>
<dbReference type="PDBsum" id="1V8F"/>
<dbReference type="SMR" id="Q5SHF5"/>
<dbReference type="DrugBank" id="DB03570">
    <property type="generic name" value="Tris-Hydroxymethyl-Methyl-Ammonium"/>
</dbReference>
<dbReference type="EnsemblBacteria" id="BAD71598">
    <property type="protein sequence ID" value="BAD71598"/>
    <property type="gene ID" value="BAD71598"/>
</dbReference>
<dbReference type="GeneID" id="3169469"/>
<dbReference type="KEGG" id="ttj:TTHA1775"/>
<dbReference type="PATRIC" id="fig|300852.9.peg.1745"/>
<dbReference type="eggNOG" id="COG0414">
    <property type="taxonomic scope" value="Bacteria"/>
</dbReference>
<dbReference type="HOGENOM" id="CLU_047148_0_0_0"/>
<dbReference type="PhylomeDB" id="Q5SHF5"/>
<dbReference type="UniPathway" id="UPA00028">
    <property type="reaction ID" value="UER00005"/>
</dbReference>
<dbReference type="EvolutionaryTrace" id="Q5SHF5"/>
<dbReference type="Proteomes" id="UP000000532">
    <property type="component" value="Chromosome"/>
</dbReference>
<dbReference type="GO" id="GO:0005829">
    <property type="term" value="C:cytosol"/>
    <property type="evidence" value="ECO:0007669"/>
    <property type="project" value="TreeGrafter"/>
</dbReference>
<dbReference type="GO" id="GO:0005524">
    <property type="term" value="F:ATP binding"/>
    <property type="evidence" value="ECO:0007669"/>
    <property type="project" value="UniProtKB-KW"/>
</dbReference>
<dbReference type="GO" id="GO:0004592">
    <property type="term" value="F:pantoate-beta-alanine ligase activity"/>
    <property type="evidence" value="ECO:0007669"/>
    <property type="project" value="UniProtKB-UniRule"/>
</dbReference>
<dbReference type="GO" id="GO:0015940">
    <property type="term" value="P:pantothenate biosynthetic process"/>
    <property type="evidence" value="ECO:0007669"/>
    <property type="project" value="UniProtKB-UniRule"/>
</dbReference>
<dbReference type="CDD" id="cd00560">
    <property type="entry name" value="PanC"/>
    <property type="match status" value="1"/>
</dbReference>
<dbReference type="FunFam" id="3.40.50.620:FF:000114">
    <property type="entry name" value="Pantothenate synthetase"/>
    <property type="match status" value="1"/>
</dbReference>
<dbReference type="Gene3D" id="3.40.50.620">
    <property type="entry name" value="HUPs"/>
    <property type="match status" value="1"/>
</dbReference>
<dbReference type="Gene3D" id="3.30.1300.10">
    <property type="entry name" value="Pantoate-beta-alanine ligase, C-terminal domain"/>
    <property type="match status" value="1"/>
</dbReference>
<dbReference type="HAMAP" id="MF_00158">
    <property type="entry name" value="PanC"/>
    <property type="match status" value="1"/>
</dbReference>
<dbReference type="InterPro" id="IPR004821">
    <property type="entry name" value="Cyt_trans-like"/>
</dbReference>
<dbReference type="InterPro" id="IPR003721">
    <property type="entry name" value="Pantoate_ligase"/>
</dbReference>
<dbReference type="InterPro" id="IPR042176">
    <property type="entry name" value="Pantoate_ligase_C"/>
</dbReference>
<dbReference type="InterPro" id="IPR014729">
    <property type="entry name" value="Rossmann-like_a/b/a_fold"/>
</dbReference>
<dbReference type="NCBIfam" id="TIGR00125">
    <property type="entry name" value="cyt_tran_rel"/>
    <property type="match status" value="1"/>
</dbReference>
<dbReference type="NCBIfam" id="TIGR00018">
    <property type="entry name" value="panC"/>
    <property type="match status" value="1"/>
</dbReference>
<dbReference type="PANTHER" id="PTHR21299">
    <property type="entry name" value="CYTIDYLATE KINASE/PANTOATE-BETA-ALANINE LIGASE"/>
    <property type="match status" value="1"/>
</dbReference>
<dbReference type="PANTHER" id="PTHR21299:SF1">
    <property type="entry name" value="PANTOATE--BETA-ALANINE LIGASE"/>
    <property type="match status" value="1"/>
</dbReference>
<dbReference type="Pfam" id="PF02569">
    <property type="entry name" value="Pantoate_ligase"/>
    <property type="match status" value="1"/>
</dbReference>
<dbReference type="SUPFAM" id="SSF52374">
    <property type="entry name" value="Nucleotidylyl transferase"/>
    <property type="match status" value="1"/>
</dbReference>
<keyword id="KW-0002">3D-structure</keyword>
<keyword id="KW-0067">ATP-binding</keyword>
<keyword id="KW-0963">Cytoplasm</keyword>
<keyword id="KW-0436">Ligase</keyword>
<keyword id="KW-0547">Nucleotide-binding</keyword>
<keyword id="KW-0566">Pantothenate biosynthesis</keyword>
<keyword id="KW-1185">Reference proteome</keyword>
<comment type="function">
    <text evidence="1">Catalyzes the condensation of pantoate with beta-alanine in an ATP-dependent reaction via a pantoyl-adenylate intermediate.</text>
</comment>
<comment type="catalytic activity">
    <reaction evidence="1">
        <text>(R)-pantoate + beta-alanine + ATP = (R)-pantothenate + AMP + diphosphate + H(+)</text>
        <dbReference type="Rhea" id="RHEA:10912"/>
        <dbReference type="ChEBI" id="CHEBI:15378"/>
        <dbReference type="ChEBI" id="CHEBI:15980"/>
        <dbReference type="ChEBI" id="CHEBI:29032"/>
        <dbReference type="ChEBI" id="CHEBI:30616"/>
        <dbReference type="ChEBI" id="CHEBI:33019"/>
        <dbReference type="ChEBI" id="CHEBI:57966"/>
        <dbReference type="ChEBI" id="CHEBI:456215"/>
        <dbReference type="EC" id="6.3.2.1"/>
    </reaction>
</comment>
<comment type="pathway">
    <text evidence="1">Cofactor biosynthesis; (R)-pantothenate biosynthesis; (R)-pantothenate from (R)-pantoate and beta-alanine: step 1/1.</text>
</comment>
<comment type="subunit">
    <text evidence="2">Homodimer.</text>
</comment>
<comment type="subcellular location">
    <subcellularLocation>
        <location evidence="1">Cytoplasm</location>
    </subcellularLocation>
</comment>
<comment type="miscellaneous">
    <text evidence="1">The reaction proceeds by a bi uni uni bi ping pong mechanism.</text>
</comment>
<comment type="miscellaneous">
    <text>PDB 1UFV apparently has a Val-49-Ala mutation.</text>
</comment>
<comment type="similarity">
    <text evidence="1">Belongs to the pantothenate synthetase family.</text>
</comment>
<proteinExistence type="evidence at protein level"/>
<feature type="chain" id="PRO_0000128283" description="Pantothenate synthetase">
    <location>
        <begin position="1"/>
        <end position="276"/>
    </location>
</feature>
<feature type="active site" description="Proton donor" evidence="1">
    <location>
        <position position="32"/>
    </location>
</feature>
<feature type="binding site" evidence="1">
    <location>
        <begin position="25"/>
        <end position="32"/>
    </location>
    <ligand>
        <name>ATP</name>
        <dbReference type="ChEBI" id="CHEBI:30616"/>
    </ligand>
</feature>
<feature type="binding site" evidence="1">
    <location>
        <position position="56"/>
    </location>
    <ligand>
        <name>(R)-pantoate</name>
        <dbReference type="ChEBI" id="CHEBI:15980"/>
    </ligand>
</feature>
<feature type="binding site" evidence="1">
    <location>
        <position position="56"/>
    </location>
    <ligand>
        <name>beta-alanine</name>
        <dbReference type="ChEBI" id="CHEBI:57966"/>
    </ligand>
</feature>
<feature type="binding site" evidence="1">
    <location>
        <begin position="143"/>
        <end position="146"/>
    </location>
    <ligand>
        <name>ATP</name>
        <dbReference type="ChEBI" id="CHEBI:30616"/>
    </ligand>
</feature>
<feature type="binding site" evidence="1">
    <location>
        <position position="149"/>
    </location>
    <ligand>
        <name>(R)-pantoate</name>
        <dbReference type="ChEBI" id="CHEBI:15980"/>
    </ligand>
</feature>
<feature type="binding site" evidence="1">
    <location>
        <position position="172"/>
    </location>
    <ligand>
        <name>ATP</name>
        <dbReference type="ChEBI" id="CHEBI:30616"/>
    </ligand>
</feature>
<feature type="binding site" evidence="1">
    <location>
        <begin position="180"/>
        <end position="183"/>
    </location>
    <ligand>
        <name>ATP</name>
        <dbReference type="ChEBI" id="CHEBI:30616"/>
    </ligand>
</feature>
<feature type="strand" evidence="3">
    <location>
        <begin position="2"/>
        <end position="4"/>
    </location>
</feature>
<feature type="helix" evidence="3">
    <location>
        <begin position="7"/>
        <end position="13"/>
    </location>
</feature>
<feature type="strand" evidence="3">
    <location>
        <begin position="19"/>
        <end position="24"/>
    </location>
</feature>
<feature type="helix" evidence="3">
    <location>
        <begin position="30"/>
        <end position="42"/>
    </location>
</feature>
<feature type="strand" evidence="3">
    <location>
        <begin position="44"/>
        <end position="50"/>
    </location>
</feature>
<feature type="helix" evidence="3">
    <location>
        <begin position="54"/>
        <end position="56"/>
    </location>
</feature>
<feature type="turn" evidence="3">
    <location>
        <begin position="63"/>
        <end position="65"/>
    </location>
</feature>
<feature type="helix" evidence="3">
    <location>
        <begin position="70"/>
        <end position="79"/>
    </location>
</feature>
<feature type="strand" evidence="3">
    <location>
        <begin position="83"/>
        <end position="86"/>
    </location>
</feature>
<feature type="helix" evidence="3">
    <location>
        <begin position="90"/>
        <end position="93"/>
    </location>
</feature>
<feature type="strand" evidence="3">
    <location>
        <begin position="100"/>
        <end position="104"/>
    </location>
</feature>
<feature type="helix" evidence="3">
    <location>
        <begin position="107"/>
        <end position="110"/>
    </location>
</feature>
<feature type="helix" evidence="3">
    <location>
        <begin position="113"/>
        <end position="116"/>
    </location>
</feature>
<feature type="helix" evidence="3">
    <location>
        <begin position="120"/>
        <end position="135"/>
    </location>
</feature>
<feature type="strand" evidence="3">
    <location>
        <begin position="138"/>
        <end position="143"/>
    </location>
</feature>
<feature type="helix" evidence="3">
    <location>
        <begin position="144"/>
        <end position="146"/>
    </location>
</feature>
<feature type="helix" evidence="3">
    <location>
        <begin position="147"/>
        <end position="160"/>
    </location>
</feature>
<feature type="strand" evidence="3">
    <location>
        <begin position="165"/>
        <end position="169"/>
    </location>
</feature>
<feature type="helix" evidence="3">
    <location>
        <begin position="182"/>
        <end position="186"/>
    </location>
</feature>
<feature type="helix" evidence="3">
    <location>
        <begin position="189"/>
        <end position="194"/>
    </location>
</feature>
<feature type="helix" evidence="3">
    <location>
        <begin position="197"/>
        <end position="210"/>
    </location>
</feature>
<feature type="helix" evidence="3">
    <location>
        <begin position="215"/>
        <end position="226"/>
    </location>
</feature>
<feature type="strand" evidence="3">
    <location>
        <begin position="233"/>
        <end position="240"/>
    </location>
</feature>
<feature type="turn" evidence="3">
    <location>
        <begin position="242"/>
        <end position="244"/>
    </location>
</feature>
<feature type="strand" evidence="3">
    <location>
        <begin position="256"/>
        <end position="263"/>
    </location>
</feature>
<feature type="strand" evidence="3">
    <location>
        <begin position="266"/>
        <end position="273"/>
    </location>
</feature>
<sequence length="276" mass="30695">MRTVSTVAELRAALPREGVGFVPTMGYLHRGHLALVERARRENPFVVVSVFVNPLQFGPGEDYHRYPRDLERDRALLQEAGVDLLFAPGVEEMYPEGFATRVQVEGPLTALWEGAVRPGHFQGVATVVARLFLLVQPQRAYFGEKDYQQLLVVRRMVRDLGFPVEVVGVPTVREEDGLALSSRNVYLSPETRKKAPVLYRALLAMREVAGQGGSVAEALRAGEEALRAVPEFRKDYLAIVHPETLLPLSDWVAGARGIVAGRFPEARLIDNLEVYP</sequence>
<name>PANC_THET8</name>
<gene>
    <name evidence="1" type="primary">panC</name>
    <name type="ordered locus">TTHA1775</name>
</gene>
<evidence type="ECO:0000255" key="1">
    <source>
        <dbReference type="HAMAP-Rule" id="MF_00158"/>
    </source>
</evidence>
<evidence type="ECO:0000305" key="2">
    <source ref="2"/>
</evidence>
<evidence type="ECO:0007829" key="3">
    <source>
        <dbReference type="PDB" id="1V8F"/>
    </source>
</evidence>
<protein>
    <recommendedName>
        <fullName evidence="1">Pantothenate synthetase</fullName>
        <shortName evidence="1">PS</shortName>
        <ecNumber evidence="1">6.3.2.1</ecNumber>
    </recommendedName>
    <alternativeName>
        <fullName evidence="1">Pantoate--beta-alanine ligase</fullName>
    </alternativeName>
    <alternativeName>
        <fullName evidence="1">Pantoate-activating enzyme</fullName>
    </alternativeName>
</protein>
<accession>Q5SHF5</accession>
<accession>P83701</accession>
<organism>
    <name type="scientific">Thermus thermophilus (strain ATCC 27634 / DSM 579 / HB8)</name>
    <dbReference type="NCBI Taxonomy" id="300852"/>
    <lineage>
        <taxon>Bacteria</taxon>
        <taxon>Thermotogati</taxon>
        <taxon>Deinococcota</taxon>
        <taxon>Deinococci</taxon>
        <taxon>Thermales</taxon>
        <taxon>Thermaceae</taxon>
        <taxon>Thermus</taxon>
    </lineage>
</organism>